<proteinExistence type="evidence at transcript level"/>
<feature type="chain" id="PRO_0000437722" description="O-methyltransferase gliM">
    <location>
        <begin position="1"/>
        <end position="431"/>
    </location>
</feature>
<feature type="coiled-coil region" evidence="1">
    <location>
        <begin position="20"/>
        <end position="85"/>
    </location>
</feature>
<feature type="active site" description="Proton acceptor" evidence="2">
    <location>
        <position position="338"/>
    </location>
</feature>
<feature type="binding site" evidence="2">
    <location>
        <position position="287"/>
    </location>
    <ligand>
        <name>S-adenosyl-L-methionine</name>
        <dbReference type="ChEBI" id="CHEBI:59789"/>
    </ligand>
</feature>
<feature type="binding site" evidence="2">
    <location>
        <begin position="319"/>
        <end position="321"/>
    </location>
    <ligand>
        <name>S-adenosyl-L-methionine</name>
        <dbReference type="ChEBI" id="CHEBI:59789"/>
    </ligand>
</feature>
<dbReference type="EC" id="2.1.1.-" evidence="2"/>
<dbReference type="EMBL" id="AY838877">
    <property type="protein sequence ID" value="AAW03305.1"/>
    <property type="status" value="ALT_SEQ"/>
    <property type="molecule type" value="Genomic_DNA"/>
</dbReference>
<dbReference type="EMBL" id="AAHF01000006">
    <property type="protein sequence ID" value="EAL88819.2"/>
    <property type="molecule type" value="Genomic_DNA"/>
</dbReference>
<dbReference type="RefSeq" id="XP_750857.2">
    <property type="nucleotide sequence ID" value="XM_745764.2"/>
</dbReference>
<dbReference type="SMR" id="Q4WMJ5"/>
<dbReference type="STRING" id="330879.Q4WMJ5"/>
<dbReference type="EnsemblFungi" id="EAL88819">
    <property type="protein sequence ID" value="EAL88819"/>
    <property type="gene ID" value="AFUA_6G09680"/>
</dbReference>
<dbReference type="GeneID" id="3508162"/>
<dbReference type="KEGG" id="afm:AFUA_6G09680"/>
<dbReference type="VEuPathDB" id="FungiDB:Afu6g09680"/>
<dbReference type="eggNOG" id="KOG3178">
    <property type="taxonomic scope" value="Eukaryota"/>
</dbReference>
<dbReference type="HOGENOM" id="CLU_005533_12_2_1"/>
<dbReference type="InParanoid" id="Q4WMJ5"/>
<dbReference type="OMA" id="HEWFTTE"/>
<dbReference type="OrthoDB" id="1606438at2759"/>
<dbReference type="Proteomes" id="UP000002530">
    <property type="component" value="Chromosome 6"/>
</dbReference>
<dbReference type="GO" id="GO:0008171">
    <property type="term" value="F:O-methyltransferase activity"/>
    <property type="evidence" value="ECO:0007669"/>
    <property type="project" value="InterPro"/>
</dbReference>
<dbReference type="GO" id="GO:0046983">
    <property type="term" value="F:protein dimerization activity"/>
    <property type="evidence" value="ECO:0007669"/>
    <property type="project" value="InterPro"/>
</dbReference>
<dbReference type="GO" id="GO:2001310">
    <property type="term" value="P:gliotoxin biosynthetic process"/>
    <property type="evidence" value="ECO:0000304"/>
    <property type="project" value="UniProtKB"/>
</dbReference>
<dbReference type="GO" id="GO:0032259">
    <property type="term" value="P:methylation"/>
    <property type="evidence" value="ECO:0007669"/>
    <property type="project" value="UniProtKB-KW"/>
</dbReference>
<dbReference type="GO" id="GO:0043386">
    <property type="term" value="P:mycotoxin biosynthetic process"/>
    <property type="evidence" value="ECO:0000270"/>
    <property type="project" value="AspGD"/>
</dbReference>
<dbReference type="GO" id="GO:0052562">
    <property type="term" value="P:symbiont-mediated suppression of host immune response"/>
    <property type="evidence" value="ECO:0000304"/>
    <property type="project" value="UniProtKB"/>
</dbReference>
<dbReference type="FunFam" id="3.40.50.150:FF:000486">
    <property type="entry name" value="O-methyltransferase glim"/>
    <property type="match status" value="1"/>
</dbReference>
<dbReference type="Gene3D" id="3.40.50.150">
    <property type="entry name" value="Vaccinia Virus protein VP39"/>
    <property type="match status" value="1"/>
</dbReference>
<dbReference type="Gene3D" id="1.10.10.10">
    <property type="entry name" value="Winged helix-like DNA-binding domain superfamily/Winged helix DNA-binding domain"/>
    <property type="match status" value="1"/>
</dbReference>
<dbReference type="InterPro" id="IPR016461">
    <property type="entry name" value="COMT-like"/>
</dbReference>
<dbReference type="InterPro" id="IPR001077">
    <property type="entry name" value="O_MeTrfase_dom"/>
</dbReference>
<dbReference type="InterPro" id="IPR012967">
    <property type="entry name" value="Plant_O-MeTrfase_dimerisation"/>
</dbReference>
<dbReference type="InterPro" id="IPR029063">
    <property type="entry name" value="SAM-dependent_MTases_sf"/>
</dbReference>
<dbReference type="InterPro" id="IPR036388">
    <property type="entry name" value="WH-like_DNA-bd_sf"/>
</dbReference>
<dbReference type="InterPro" id="IPR036390">
    <property type="entry name" value="WH_DNA-bd_sf"/>
</dbReference>
<dbReference type="PANTHER" id="PTHR43712:SF2">
    <property type="entry name" value="O-METHYLTRANSFERASE CICE"/>
    <property type="match status" value="1"/>
</dbReference>
<dbReference type="PANTHER" id="PTHR43712">
    <property type="entry name" value="PUTATIVE (AFU_ORTHOLOGUE AFUA_4G14580)-RELATED"/>
    <property type="match status" value="1"/>
</dbReference>
<dbReference type="Pfam" id="PF08100">
    <property type="entry name" value="Dimerisation"/>
    <property type="match status" value="1"/>
</dbReference>
<dbReference type="Pfam" id="PF00891">
    <property type="entry name" value="Methyltransf_2"/>
    <property type="match status" value="1"/>
</dbReference>
<dbReference type="SUPFAM" id="SSF53335">
    <property type="entry name" value="S-adenosyl-L-methionine-dependent methyltransferases"/>
    <property type="match status" value="1"/>
</dbReference>
<dbReference type="SUPFAM" id="SSF46785">
    <property type="entry name" value="Winged helix' DNA-binding domain"/>
    <property type="match status" value="1"/>
</dbReference>
<dbReference type="PROSITE" id="PS51683">
    <property type="entry name" value="SAM_OMT_II"/>
    <property type="match status" value="1"/>
</dbReference>
<sequence length="431" mass="48431">MAPGLLENNTLSGTAAPRTEFKAIVNDLRELQAHVQRVQSAIEAPEVQSWLNEQLHHPDQLPDKELEQLALDLVDSMDKLQLQLVPSVSLLTDGFFGYLNSKTLWTVVEAQVADRLAENGPQPVSTLGLRCGIQPERLAQLLDTLVSNGIFAYNPADDTYSNNRASLLLCHDHWTQWHLWADLYPNEFFDVSRAMPQAVRLGESRTAAQIAYGTDLDLFEYLAKEQKLAKFQKTLGAGAVAQARGLTVDYPWEEIGSEPILDIGGGSGAFLASLLRAHPHLRGSLMDIQSVIELITPEFREPHGRFSDIGSRVQQLVVGDFTKQIPPSAVYTMKWCLHDWVDDDVLTILKNVRRSIVPSSVSRFLVVESIKSPGRSGRLPRYGDLIMMITCNGKERSLEDWKRLGELAGWKLYQVHRVRRAWPCIIDFRPM</sequence>
<reference key="1">
    <citation type="journal article" date="2005" name="FEMS Microbiol. Lett.">
        <title>Bioinformatic and expression analysis of the putative gliotoxin biosynthetic gene cluster of Aspergillus fumigatus.</title>
        <authorList>
            <person name="Gardiner D.M."/>
            <person name="Howlett B.J."/>
        </authorList>
    </citation>
    <scope>NUCLEOTIDE SEQUENCE [GENOMIC DNA]</scope>
    <scope>FUNCTION</scope>
    <source>
        <strain>ATCC MYA-4609 / CBS 101355 / FGSC A1100 / Af293</strain>
    </source>
</reference>
<reference key="2">
    <citation type="journal article" date="2005" name="Nature">
        <title>Genomic sequence of the pathogenic and allergenic filamentous fungus Aspergillus fumigatus.</title>
        <authorList>
            <person name="Nierman W.C."/>
            <person name="Pain A."/>
            <person name="Anderson M.J."/>
            <person name="Wortman J.R."/>
            <person name="Kim H.S."/>
            <person name="Arroyo J."/>
            <person name="Berriman M."/>
            <person name="Abe K."/>
            <person name="Archer D.B."/>
            <person name="Bermejo C."/>
            <person name="Bennett J.W."/>
            <person name="Bowyer P."/>
            <person name="Chen D."/>
            <person name="Collins M."/>
            <person name="Coulsen R."/>
            <person name="Davies R."/>
            <person name="Dyer P.S."/>
            <person name="Farman M.L."/>
            <person name="Fedorova N."/>
            <person name="Fedorova N.D."/>
            <person name="Feldblyum T.V."/>
            <person name="Fischer R."/>
            <person name="Fosker N."/>
            <person name="Fraser A."/>
            <person name="Garcia J.L."/>
            <person name="Garcia M.J."/>
            <person name="Goble A."/>
            <person name="Goldman G.H."/>
            <person name="Gomi K."/>
            <person name="Griffith-Jones S."/>
            <person name="Gwilliam R."/>
            <person name="Haas B.J."/>
            <person name="Haas H."/>
            <person name="Harris D.E."/>
            <person name="Horiuchi H."/>
            <person name="Huang J."/>
            <person name="Humphray S."/>
            <person name="Jimenez J."/>
            <person name="Keller N."/>
            <person name="Khouri H."/>
            <person name="Kitamoto K."/>
            <person name="Kobayashi T."/>
            <person name="Konzack S."/>
            <person name="Kulkarni R."/>
            <person name="Kumagai T."/>
            <person name="Lafton A."/>
            <person name="Latge J.-P."/>
            <person name="Li W."/>
            <person name="Lord A."/>
            <person name="Lu C."/>
            <person name="Majoros W.H."/>
            <person name="May G.S."/>
            <person name="Miller B.L."/>
            <person name="Mohamoud Y."/>
            <person name="Molina M."/>
            <person name="Monod M."/>
            <person name="Mouyna I."/>
            <person name="Mulligan S."/>
            <person name="Murphy L.D."/>
            <person name="O'Neil S."/>
            <person name="Paulsen I."/>
            <person name="Penalva M.A."/>
            <person name="Pertea M."/>
            <person name="Price C."/>
            <person name="Pritchard B.L."/>
            <person name="Quail M.A."/>
            <person name="Rabbinowitsch E."/>
            <person name="Rawlins N."/>
            <person name="Rajandream M.A."/>
            <person name="Reichard U."/>
            <person name="Renauld H."/>
            <person name="Robson G.D."/>
            <person name="Rodriguez de Cordoba S."/>
            <person name="Rodriguez-Pena J.M."/>
            <person name="Ronning C.M."/>
            <person name="Rutter S."/>
            <person name="Salzberg S.L."/>
            <person name="Sanchez M."/>
            <person name="Sanchez-Ferrero J.C."/>
            <person name="Saunders D."/>
            <person name="Seeger K."/>
            <person name="Squares R."/>
            <person name="Squares S."/>
            <person name="Takeuchi M."/>
            <person name="Tekaia F."/>
            <person name="Turner G."/>
            <person name="Vazquez de Aldana C.R."/>
            <person name="Weidman J."/>
            <person name="White O."/>
            <person name="Woodward J.R."/>
            <person name="Yu J.-H."/>
            <person name="Fraser C.M."/>
            <person name="Galagan J.E."/>
            <person name="Asai K."/>
            <person name="Machida M."/>
            <person name="Hall N."/>
            <person name="Barrell B.G."/>
            <person name="Denning D.W."/>
        </authorList>
    </citation>
    <scope>NUCLEOTIDE SEQUENCE [LARGE SCALE GENOMIC DNA]</scope>
    <source>
        <strain>ATCC MYA-4609 / CBS 101355 / FGSC A1100 / Af293</strain>
    </source>
</reference>
<reference key="3">
    <citation type="journal article" date="2006" name="Biochemistry">
        <title>GliP, a multimodular nonribosomal peptide synthetase in Aspergillus fumigatus, makes the diketopiperazine scaffold of gliotoxin.</title>
        <authorList>
            <person name="Balibar C.J."/>
            <person name="Walsh C.T."/>
        </authorList>
    </citation>
    <scope>FUNCTION</scope>
</reference>
<reference key="4">
    <citation type="journal article" date="2007" name="Eukaryot. Cell">
        <title>Gliotoxin is a virulence factor of Aspergillus fumigatus: gliP deletion attenuates virulence in mice immunosuppressed with hydrocortisone.</title>
        <authorList>
            <person name="Sugui J.A."/>
            <person name="Pardo J."/>
            <person name="Chang Y.C."/>
            <person name="Zarember K.A."/>
            <person name="Nardone G."/>
            <person name="Galvez E.M."/>
            <person name="Mullbacher A."/>
            <person name="Gallin J.I."/>
            <person name="Simon M.M."/>
            <person name="Kwon-Chung K.J."/>
        </authorList>
    </citation>
    <scope>FUNCTION</scope>
</reference>
<reference key="5">
    <citation type="journal article" date="2008" name="J. Infect. Dis.">
        <title>Gliotoxin production in Aspergillus fumigatus contributes to host-specific differences in virulence.</title>
        <authorList>
            <person name="Spikes S."/>
            <person name="Xu R."/>
            <person name="Nguyen C.K."/>
            <person name="Chamilos G."/>
            <person name="Kontoyiannis D.P."/>
            <person name="Jacobson R.H."/>
            <person name="Ejzykowicz D.E."/>
            <person name="Chiang L.Y."/>
            <person name="Filler S.G."/>
            <person name="May G.S."/>
        </authorList>
    </citation>
    <scope>FUNCTION</scope>
</reference>
<reference key="6">
    <citation type="journal article" date="2010" name="PLoS Pathog.">
        <title>Self-protection against gliotoxin--a component of the gliotoxin biosynthetic cluster, GliT, completely protects Aspergillus fumigatus against exogenous gliotoxin.</title>
        <authorList>
            <person name="Schrettl M."/>
            <person name="Carberry S."/>
            <person name="Kavanagh K."/>
            <person name="Haas H."/>
            <person name="Jones G.W."/>
            <person name="O'Brien J."/>
            <person name="Nolan A."/>
            <person name="Stephens J."/>
            <person name="Fenelon O."/>
            <person name="Doyle S."/>
        </authorList>
    </citation>
    <scope>FUNCTION</scope>
</reference>
<reference key="7">
    <citation type="journal article" date="2011" name="Chem. Biol.">
        <title>The role of glutathione S-transferase GliG in gliotoxin biosynthesis in Aspergillus fumigatus.</title>
        <authorList>
            <person name="Davis C."/>
            <person name="Carberry S."/>
            <person name="Schrettl M."/>
            <person name="Singh I."/>
            <person name="Stephens J.C."/>
            <person name="Barry S.M."/>
            <person name="Kavanagh K."/>
            <person name="Challis G.L."/>
            <person name="Brougham D."/>
            <person name="Doyle S."/>
        </authorList>
    </citation>
    <scope>FUNCTION</scope>
</reference>
<reference key="8">
    <citation type="journal article" date="2011" name="J. Am. Chem. Soc.">
        <title>Identification of cryptic products of the gliotoxin gene cluster using NMR-based comparative metabolomics and a model for gliotoxin biosynthesis.</title>
        <authorList>
            <person name="Forseth R.R."/>
            <person name="Fox E.M."/>
            <person name="Chung D."/>
            <person name="Howlett B.J."/>
            <person name="Keller N.P."/>
            <person name="Schroeder F.C."/>
        </authorList>
    </citation>
    <scope>FUNCTION</scope>
</reference>
<reference key="9">
    <citation type="journal article" date="2011" name="J. Am. Chem. Soc.">
        <title>A dedicated glutathione S-transferase mediates carbon-sulfur bond formation in gliotoxin biosynthesis.</title>
        <authorList>
            <person name="Scharf D.H."/>
            <person name="Remme N."/>
            <person name="Habel A."/>
            <person name="Chankhamjon P."/>
            <person name="Scherlach K."/>
            <person name="Heinekamp T."/>
            <person name="Hortschansky P."/>
            <person name="Brakhage A.A."/>
            <person name="Hertweck C."/>
        </authorList>
    </citation>
    <scope>FUNCTION</scope>
</reference>
<reference key="10">
    <citation type="journal article" date="2012" name="Angew. Chem. Int. Ed.">
        <title>Epidithiol formation by an unprecedented twin carbon-sulfur lyase in the gliotoxin pathway.</title>
        <authorList>
            <person name="Scharf D.H."/>
            <person name="Chankhamjon P."/>
            <person name="Scherlach K."/>
            <person name="Heinekamp T."/>
            <person name="Roth M."/>
            <person name="Brakhage A.A."/>
            <person name="Hertweck C."/>
        </authorList>
    </citation>
    <scope>FUNCTION</scope>
</reference>
<reference key="11">
    <citation type="journal article" date="2012" name="Eukaryot. Cell">
        <title>The Aspergillus fumigatus protein GliK protects against oxidative stress and is essential for gliotoxin biosynthesis.</title>
        <authorList>
            <person name="Gallagher L."/>
            <person name="Owens R.A."/>
            <person name="Dolan S.K."/>
            <person name="O'Keeffe G."/>
            <person name="Schrettl M."/>
            <person name="Kavanagh K."/>
            <person name="Jones G.W."/>
            <person name="Doyle S."/>
        </authorList>
    </citation>
    <scope>FUNCTION</scope>
</reference>
<reference key="12">
    <citation type="journal article" date="2013" name="Angew. Chem. Int. Ed.">
        <title>Epidithiodiketopiperazine biosynthesis: a four-enzyme cascade converts glutathione conjugates into transannular disulfide bridges.</title>
        <authorList>
            <person name="Scharf D.H."/>
            <person name="Chankhamjon P."/>
            <person name="Scherlach K."/>
            <person name="Heinekamp T."/>
            <person name="Willing K."/>
            <person name="Brakhage A.A."/>
            <person name="Hertweck C."/>
        </authorList>
    </citation>
    <scope>FUNCTION</scope>
</reference>
<reference key="13">
    <citation type="journal article" date="2013" name="Bioorg. Med. Chem. Lett.">
        <title>Reconstitution of the early steps of gliotoxin biosynthesis in Aspergillus nidulans reveals the role of the monooxygenase GliC.</title>
        <authorList>
            <person name="Chang S.L."/>
            <person name="Chiang Y.M."/>
            <person name="Yeh H.H."/>
            <person name="Wu T.K."/>
            <person name="Wang C.C."/>
        </authorList>
    </citation>
    <scope>FUNCTION</scope>
</reference>
<reference key="14">
    <citation type="journal article" date="2014" name="J. Am. Chem. Soc.">
        <title>Opposed effects of enzymatic gliotoxin N- and S-methylations.</title>
        <authorList>
            <person name="Scharf D.H."/>
            <person name="Habel A."/>
            <person name="Heinekamp T."/>
            <person name="Brakhage A.A."/>
            <person name="Hertweck C."/>
        </authorList>
    </citation>
    <scope>FUNCTION</scope>
</reference>
<reference key="15">
    <citation type="journal article" date="2015" name="Biochem. Biophys. Res. Commun.">
        <title>Proteomic analyses reveal the key roles of BrlA and AbaA in biogenesis of gliotoxin in Aspergillus fumigatus.</title>
        <authorList>
            <person name="Shin K.S."/>
            <person name="Kim Y.H."/>
            <person name="Yu J.H."/>
        </authorList>
    </citation>
    <scope>INDUCTION</scope>
</reference>
<reference key="16">
    <citation type="journal article" date="2015" name="Eukaryot. Cell">
        <title>Interplay between gliotoxin resistance, secretion, and the methyl/methionine cycle in Aspergillus fumigatus.</title>
        <authorList>
            <person name="Owens R.A."/>
            <person name="O'Keeffe G."/>
            <person name="Smith E.B."/>
            <person name="Dolan S.K."/>
            <person name="Hammel S."/>
            <person name="Sheridan K.J."/>
            <person name="Fitzpatrick D.A."/>
            <person name="Keane T.M."/>
            <person name="Jones G.W."/>
            <person name="Doyle S."/>
        </authorList>
    </citation>
    <scope>FUNCTION</scope>
</reference>
<protein>
    <recommendedName>
        <fullName evidence="16">O-methyltransferase gliM</fullName>
        <ecNumber evidence="2">2.1.1.-</ecNumber>
    </recommendedName>
    <alternativeName>
        <fullName evidence="15">Gliotoxin biosynthesis protein M</fullName>
    </alternativeName>
</protein>
<accession>Q4WMJ5</accession>
<accession>Q5MBU1</accession>
<evidence type="ECO:0000255" key="1"/>
<evidence type="ECO:0000255" key="2">
    <source>
        <dbReference type="PROSITE-ProRule" id="PRU01020"/>
    </source>
</evidence>
<evidence type="ECO:0000269" key="3">
    <source>
    </source>
</evidence>
<evidence type="ECO:0000269" key="4">
    <source>
    </source>
</evidence>
<evidence type="ECO:0000269" key="5">
    <source>
    </source>
</evidence>
<evidence type="ECO:0000269" key="6">
    <source>
    </source>
</evidence>
<evidence type="ECO:0000269" key="7">
    <source>
    </source>
</evidence>
<evidence type="ECO:0000269" key="8">
    <source>
    </source>
</evidence>
<evidence type="ECO:0000269" key="9">
    <source>
    </source>
</evidence>
<evidence type="ECO:0000269" key="10">
    <source>
    </source>
</evidence>
<evidence type="ECO:0000269" key="11">
    <source>
    </source>
</evidence>
<evidence type="ECO:0000269" key="12">
    <source>
    </source>
</evidence>
<evidence type="ECO:0000269" key="13">
    <source>
    </source>
</evidence>
<evidence type="ECO:0000269" key="14">
    <source>
    </source>
</evidence>
<evidence type="ECO:0000303" key="15">
    <source>
    </source>
</evidence>
<evidence type="ECO:0000305" key="16"/>
<evidence type="ECO:0000305" key="17">
    <source>
    </source>
</evidence>
<name>GLIM_ASPFU</name>
<comment type="function">
    <text evidence="3 4 5 6 7 8 9 10 11 12 13">O-methyltransferase; part of the gene cluster that mediates the biosynthesis of gliotoxin, a member of the epipolythiodioxopiperazine (ETP) class of toxins characterized by a disulfide bridged cyclic dipeptide (PubMed:15979823, PubMed:21612254). The first step in gliotoxin biosynthesis is the condensation of serine and phenylalanine to form the cyclo-L-phenylalanyl-L-serine diketopiperazine (DKP) by the NRPS gliP (PubMed:17154540, PubMed:21612254). GliP is also able to produce the DKP cyclo-L-tryptophanyl-L-serine, suggesting that the substrate specificity of the first adenylation (A) domain in gliP is sufficiently relaxed to accommodate both L-Phe and L-Trp (PubMed:23434416). The cytochrome P450 monooxygenase gliC has been shown to catalyze the subsequent hydroxylation of the alpha-carbon of L-Phe in cyclo-L-phenylalanyl-L-serine whereas the second cytochrome P450 enzyme, gliF, is presumably involved in the modification of the DKP side chain (PubMed:23434416, PubMed:24039048). The glutathione S-transferase (GST) gliG then forms a bis-glutathionylated biosynthetic intermediate which is responsible for the sulfurization of gliotoxin (PubMed:21513890, PubMed:21749092). This bis-glutathionylated intermediate is subsequently processed by the gamma-glutamyl cyclotransferase gliK to remove both gamma-glutamyl moieties (PubMed:22903976, PubMed:24039048). Subsequent processing via gliI yields a biosynthetic intermediate, which is N-methylated via the N-methyltransferase gliN, before the gliotoxin oxidoreductase gliT-mediated disulfide bridge closure (PubMed:20548963, PubMed:22936680, PubMed:24039048, PubMed:25062268). GliN-mediated amide methylation confers stability to ETP, damping the spontaneous formation of tri- and tetrasulfides (PubMed:25062268). Intracellular dithiol gliotoxin oxidized by gliT is subsequently effluxed by gliA (PubMed:26150413). Gliotoxin contributes to pathogenesis during invasive aspergillosis (PubMed:17601876, PubMed:18199036). In macrophages and neutrophils, gliotoxin showed inhibition of various different cell functions including cytokine production, antigen presentation, phagocytosis, and production of reactive oxygen species (PubMed:17601876).</text>
</comment>
<comment type="pathway">
    <text evidence="17">Mycotoxin biosynthesis.</text>
</comment>
<comment type="induction">
    <text evidence="14">Expression is positively regulated by the brlA and abaA transcription factors (PubMed:26032501).</text>
</comment>
<comment type="similarity">
    <text evidence="2">Belongs to the class I-like SAM-binding methyltransferase superfamily. Cation-independent O-methyltransferase family. COMT subfamily.</text>
</comment>
<comment type="sequence caution" evidence="16">
    <conflict type="erroneous gene model prediction">
        <sequence resource="EMBL-CDS" id="AAW03305"/>
    </conflict>
</comment>
<keyword id="KW-0175">Coiled coil</keyword>
<keyword id="KW-0489">Methyltransferase</keyword>
<keyword id="KW-1185">Reference proteome</keyword>
<keyword id="KW-0949">S-adenosyl-L-methionine</keyword>
<keyword id="KW-0808">Transferase</keyword>
<keyword id="KW-0843">Virulence</keyword>
<gene>
    <name evidence="15" type="primary">gliM</name>
    <name type="ORF">AFUA_6G09680</name>
</gene>
<organism>
    <name type="scientific">Aspergillus fumigatus (strain ATCC MYA-4609 / CBS 101355 / FGSC A1100 / Af293)</name>
    <name type="common">Neosartorya fumigata</name>
    <dbReference type="NCBI Taxonomy" id="330879"/>
    <lineage>
        <taxon>Eukaryota</taxon>
        <taxon>Fungi</taxon>
        <taxon>Dikarya</taxon>
        <taxon>Ascomycota</taxon>
        <taxon>Pezizomycotina</taxon>
        <taxon>Eurotiomycetes</taxon>
        <taxon>Eurotiomycetidae</taxon>
        <taxon>Eurotiales</taxon>
        <taxon>Aspergillaceae</taxon>
        <taxon>Aspergillus</taxon>
        <taxon>Aspergillus subgen. Fumigati</taxon>
    </lineage>
</organism>